<protein>
    <recommendedName>
        <fullName evidence="2">Small ribosomal subunit protein uS7cz/uS7cy</fullName>
    </recommendedName>
    <alternativeName>
        <fullName>30S ribosomal protein S7, chloroplastic</fullName>
    </alternativeName>
</protein>
<keyword id="KW-0150">Chloroplast</keyword>
<keyword id="KW-0934">Plastid</keyword>
<keyword id="KW-0687">Ribonucleoprotein</keyword>
<keyword id="KW-0689">Ribosomal protein</keyword>
<keyword id="KW-0694">RNA-binding</keyword>
<keyword id="KW-0699">rRNA-binding</keyword>
<proteinExistence type="inferred from homology"/>
<reference key="1">
    <citation type="journal article" date="2008" name="Nucleic Acids Res.">
        <title>The complete nucleotide sequences of the five genetically distinct plastid genomes of Oenothera, subsection Oenothera: I. Sequence evaluation and plastome evolution.</title>
        <authorList>
            <person name="Greiner S."/>
            <person name="Wang X."/>
            <person name="Rauwolf U."/>
            <person name="Silber M.V."/>
            <person name="Mayer K."/>
            <person name="Meurer J."/>
            <person name="Haberer G."/>
            <person name="Herrmann R.G."/>
        </authorList>
    </citation>
    <scope>NUCLEOTIDE SEQUENCE [LARGE SCALE GENOMIC DNA]</scope>
    <source>
        <strain>cv. Atrovirens</strain>
    </source>
</reference>
<evidence type="ECO:0000250" key="1"/>
<evidence type="ECO:0000255" key="2">
    <source>
        <dbReference type="HAMAP-Rule" id="MF_00480"/>
    </source>
</evidence>
<evidence type="ECO:0000305" key="3"/>
<accession>B0Z5H3</accession>
<dbReference type="EMBL" id="EU262891">
    <property type="protein sequence ID" value="ABX10166.1"/>
    <property type="molecule type" value="Genomic_DNA"/>
</dbReference>
<dbReference type="EMBL" id="EU262891">
    <property type="protein sequence ID" value="ABX10179.1"/>
    <property type="molecule type" value="Genomic_DNA"/>
</dbReference>
<dbReference type="SMR" id="B0Z5H3"/>
<dbReference type="GO" id="GO:0009507">
    <property type="term" value="C:chloroplast"/>
    <property type="evidence" value="ECO:0007669"/>
    <property type="project" value="UniProtKB-SubCell"/>
</dbReference>
<dbReference type="GO" id="GO:0015935">
    <property type="term" value="C:small ribosomal subunit"/>
    <property type="evidence" value="ECO:0007669"/>
    <property type="project" value="InterPro"/>
</dbReference>
<dbReference type="GO" id="GO:0019843">
    <property type="term" value="F:rRNA binding"/>
    <property type="evidence" value="ECO:0007669"/>
    <property type="project" value="UniProtKB-UniRule"/>
</dbReference>
<dbReference type="GO" id="GO:0003735">
    <property type="term" value="F:structural constituent of ribosome"/>
    <property type="evidence" value="ECO:0007669"/>
    <property type="project" value="InterPro"/>
</dbReference>
<dbReference type="GO" id="GO:0006412">
    <property type="term" value="P:translation"/>
    <property type="evidence" value="ECO:0007669"/>
    <property type="project" value="UniProtKB-UniRule"/>
</dbReference>
<dbReference type="CDD" id="cd14871">
    <property type="entry name" value="uS7_Chloroplast"/>
    <property type="match status" value="1"/>
</dbReference>
<dbReference type="FunFam" id="1.10.455.10:FF:000001">
    <property type="entry name" value="30S ribosomal protein S7"/>
    <property type="match status" value="1"/>
</dbReference>
<dbReference type="Gene3D" id="1.10.455.10">
    <property type="entry name" value="Ribosomal protein S7 domain"/>
    <property type="match status" value="1"/>
</dbReference>
<dbReference type="HAMAP" id="MF_00480_B">
    <property type="entry name" value="Ribosomal_uS7_B"/>
    <property type="match status" value="1"/>
</dbReference>
<dbReference type="InterPro" id="IPR000235">
    <property type="entry name" value="Ribosomal_uS7"/>
</dbReference>
<dbReference type="InterPro" id="IPR005717">
    <property type="entry name" value="Ribosomal_uS7_bac/org-type"/>
</dbReference>
<dbReference type="InterPro" id="IPR020606">
    <property type="entry name" value="Ribosomal_uS7_CS"/>
</dbReference>
<dbReference type="InterPro" id="IPR023798">
    <property type="entry name" value="Ribosomal_uS7_dom"/>
</dbReference>
<dbReference type="InterPro" id="IPR036823">
    <property type="entry name" value="Ribosomal_uS7_dom_sf"/>
</dbReference>
<dbReference type="NCBIfam" id="TIGR01029">
    <property type="entry name" value="rpsG_bact"/>
    <property type="match status" value="1"/>
</dbReference>
<dbReference type="PANTHER" id="PTHR11205">
    <property type="entry name" value="RIBOSOMAL PROTEIN S7"/>
    <property type="match status" value="1"/>
</dbReference>
<dbReference type="Pfam" id="PF00177">
    <property type="entry name" value="Ribosomal_S7"/>
    <property type="match status" value="1"/>
</dbReference>
<dbReference type="PIRSF" id="PIRSF002122">
    <property type="entry name" value="RPS7p_RPS7a_RPS5e_RPS7o"/>
    <property type="match status" value="1"/>
</dbReference>
<dbReference type="SUPFAM" id="SSF47973">
    <property type="entry name" value="Ribosomal protein S7"/>
    <property type="match status" value="1"/>
</dbReference>
<dbReference type="PROSITE" id="PS00052">
    <property type="entry name" value="RIBOSOMAL_S7"/>
    <property type="match status" value="1"/>
</dbReference>
<name>RR7_OENPA</name>
<organism>
    <name type="scientific">Oenothera parviflora</name>
    <name type="common">Small-flowered evening primrose</name>
    <name type="synonym">Oenothera cruciata</name>
    <dbReference type="NCBI Taxonomy" id="482429"/>
    <lineage>
        <taxon>Eukaryota</taxon>
        <taxon>Viridiplantae</taxon>
        <taxon>Streptophyta</taxon>
        <taxon>Embryophyta</taxon>
        <taxon>Tracheophyta</taxon>
        <taxon>Spermatophyta</taxon>
        <taxon>Magnoliopsida</taxon>
        <taxon>eudicotyledons</taxon>
        <taxon>Gunneridae</taxon>
        <taxon>Pentapetalae</taxon>
        <taxon>rosids</taxon>
        <taxon>malvids</taxon>
        <taxon>Myrtales</taxon>
        <taxon>Onagraceae</taxon>
        <taxon>Onagroideae</taxon>
        <taxon>Onagreae</taxon>
        <taxon>Oenothera</taxon>
    </lineage>
</organism>
<comment type="function">
    <text evidence="1">One of the primary rRNA binding proteins, it binds directly to 16S rRNA where it nucleates assembly of the head domain of the 30S subunit.</text>
</comment>
<comment type="subunit">
    <text evidence="1">Part of the 30S ribosomal subunit.</text>
</comment>
<comment type="subcellular location">
    <subcellularLocation>
        <location>Plastid</location>
        <location>Chloroplast</location>
    </subcellularLocation>
</comment>
<comment type="similarity">
    <text evidence="3">Belongs to the universal ribosomal protein uS7 family.</text>
</comment>
<feature type="chain" id="PRO_0000344355" description="Small ribosomal subunit protein uS7cz/uS7cy">
    <location>
        <begin position="1"/>
        <end position="155"/>
    </location>
</feature>
<geneLocation type="chloroplast"/>
<gene>
    <name type="primary">rps7-A</name>
</gene>
<gene>
    <name type="primary">rps7-B</name>
</gene>
<sequence length="155" mass="17556">MSRRGTAEEKTAKSDPIYRNRLVNMLINRILKHGKKSLAYQILYRAMKKIQQKTETNPLSVLRQAIRRVTPDIAVKARRASGSTHPVPIEIGSTQGRALAIRWLLGASRKRPGRNMAFKLSSELVDATKGRGGAIRKREETHRMAEANRAFAHFR</sequence>